<feature type="chain" id="PRO_1000165307" description="Small ribosomal subunit protein uS8">
    <location>
        <begin position="1"/>
        <end position="132"/>
    </location>
</feature>
<comment type="function">
    <text evidence="1">One of the primary rRNA binding proteins, it binds directly to 16S rRNA central domain where it helps coordinate assembly of the platform of the 30S subunit.</text>
</comment>
<comment type="subunit">
    <text evidence="1">Part of the 30S ribosomal subunit. Contacts proteins S5 and S12.</text>
</comment>
<comment type="similarity">
    <text evidence="1">Belongs to the universal ribosomal protein uS8 family.</text>
</comment>
<evidence type="ECO:0000255" key="1">
    <source>
        <dbReference type="HAMAP-Rule" id="MF_01302"/>
    </source>
</evidence>
<evidence type="ECO:0000305" key="2"/>
<name>RS8_BACCQ</name>
<keyword id="KW-0687">Ribonucleoprotein</keyword>
<keyword id="KW-0689">Ribosomal protein</keyword>
<keyword id="KW-0694">RNA-binding</keyword>
<keyword id="KW-0699">rRNA-binding</keyword>
<organism>
    <name type="scientific">Bacillus cereus (strain Q1)</name>
    <dbReference type="NCBI Taxonomy" id="361100"/>
    <lineage>
        <taxon>Bacteria</taxon>
        <taxon>Bacillati</taxon>
        <taxon>Bacillota</taxon>
        <taxon>Bacilli</taxon>
        <taxon>Bacillales</taxon>
        <taxon>Bacillaceae</taxon>
        <taxon>Bacillus</taxon>
        <taxon>Bacillus cereus group</taxon>
    </lineage>
</organism>
<protein>
    <recommendedName>
        <fullName evidence="1">Small ribosomal subunit protein uS8</fullName>
    </recommendedName>
    <alternativeName>
        <fullName evidence="2">30S ribosomal protein S8</fullName>
    </alternativeName>
</protein>
<proteinExistence type="inferred from homology"/>
<dbReference type="EMBL" id="CP000227">
    <property type="protein sequence ID" value="ACM10652.1"/>
    <property type="molecule type" value="Genomic_DNA"/>
</dbReference>
<dbReference type="SMR" id="B9IZK8"/>
<dbReference type="KEGG" id="bcq:BCQ_0137"/>
<dbReference type="HOGENOM" id="CLU_098428_0_2_9"/>
<dbReference type="Proteomes" id="UP000000441">
    <property type="component" value="Chromosome"/>
</dbReference>
<dbReference type="GO" id="GO:1990904">
    <property type="term" value="C:ribonucleoprotein complex"/>
    <property type="evidence" value="ECO:0007669"/>
    <property type="project" value="UniProtKB-KW"/>
</dbReference>
<dbReference type="GO" id="GO:0005840">
    <property type="term" value="C:ribosome"/>
    <property type="evidence" value="ECO:0007669"/>
    <property type="project" value="UniProtKB-KW"/>
</dbReference>
<dbReference type="GO" id="GO:0019843">
    <property type="term" value="F:rRNA binding"/>
    <property type="evidence" value="ECO:0007669"/>
    <property type="project" value="UniProtKB-UniRule"/>
</dbReference>
<dbReference type="GO" id="GO:0003735">
    <property type="term" value="F:structural constituent of ribosome"/>
    <property type="evidence" value="ECO:0007669"/>
    <property type="project" value="InterPro"/>
</dbReference>
<dbReference type="GO" id="GO:0006412">
    <property type="term" value="P:translation"/>
    <property type="evidence" value="ECO:0007669"/>
    <property type="project" value="UniProtKB-UniRule"/>
</dbReference>
<dbReference type="FunFam" id="3.30.1370.30:FF:000002">
    <property type="entry name" value="30S ribosomal protein S8"/>
    <property type="match status" value="1"/>
</dbReference>
<dbReference type="FunFam" id="3.30.1490.10:FF:000001">
    <property type="entry name" value="30S ribosomal protein S8"/>
    <property type="match status" value="1"/>
</dbReference>
<dbReference type="Gene3D" id="3.30.1370.30">
    <property type="match status" value="1"/>
</dbReference>
<dbReference type="Gene3D" id="3.30.1490.10">
    <property type="match status" value="1"/>
</dbReference>
<dbReference type="HAMAP" id="MF_01302_B">
    <property type="entry name" value="Ribosomal_uS8_B"/>
    <property type="match status" value="1"/>
</dbReference>
<dbReference type="InterPro" id="IPR000630">
    <property type="entry name" value="Ribosomal_uS8"/>
</dbReference>
<dbReference type="InterPro" id="IPR047863">
    <property type="entry name" value="Ribosomal_uS8_CS"/>
</dbReference>
<dbReference type="InterPro" id="IPR035987">
    <property type="entry name" value="Ribosomal_uS8_sf"/>
</dbReference>
<dbReference type="NCBIfam" id="NF001109">
    <property type="entry name" value="PRK00136.1"/>
    <property type="match status" value="1"/>
</dbReference>
<dbReference type="PANTHER" id="PTHR11758">
    <property type="entry name" value="40S RIBOSOMAL PROTEIN S15A"/>
    <property type="match status" value="1"/>
</dbReference>
<dbReference type="Pfam" id="PF00410">
    <property type="entry name" value="Ribosomal_S8"/>
    <property type="match status" value="1"/>
</dbReference>
<dbReference type="SUPFAM" id="SSF56047">
    <property type="entry name" value="Ribosomal protein S8"/>
    <property type="match status" value="1"/>
</dbReference>
<dbReference type="PROSITE" id="PS00053">
    <property type="entry name" value="RIBOSOMAL_S8"/>
    <property type="match status" value="1"/>
</dbReference>
<reference key="1">
    <citation type="journal article" date="2009" name="J. Bacteriol.">
        <title>Complete genome sequence of the extremophilic Bacillus cereus strain Q1 with industrial applications.</title>
        <authorList>
            <person name="Xiong Z."/>
            <person name="Jiang Y."/>
            <person name="Qi D."/>
            <person name="Lu H."/>
            <person name="Yang F."/>
            <person name="Yang J."/>
            <person name="Chen L."/>
            <person name="Sun L."/>
            <person name="Xu X."/>
            <person name="Xue Y."/>
            <person name="Zhu Y."/>
            <person name="Jin Q."/>
        </authorList>
    </citation>
    <scope>NUCLEOTIDE SEQUENCE [LARGE SCALE GENOMIC DNA]</scope>
    <source>
        <strain>Q1</strain>
    </source>
</reference>
<gene>
    <name evidence="1" type="primary">rpsH</name>
    <name type="ordered locus">BCQ_0137</name>
</gene>
<sequence length="132" mass="14882">MVMTDPIADMLTRIRNANMVRHEKLEVPASKIKKEIAELLKREGFIRDVEYIEDNKQGILRIFLKYGANNERVITGLKRISKPGLRVYAKADEVPRVLNGLGIALVSTSKGVMTDKDARQLQTGGEVVAYVW</sequence>
<accession>B9IZK8</accession>